<reference key="1">
    <citation type="journal article" date="2004" name="Nucleic Acids Res.">
        <title>Comparative analysis of the Borrelia garinii genome.</title>
        <authorList>
            <person name="Gloeckner G."/>
            <person name="Lehmann R."/>
            <person name="Romualdi A."/>
            <person name="Pradella S."/>
            <person name="Schulte-Spechtel U."/>
            <person name="Schilhabel M."/>
            <person name="Wilske B."/>
            <person name="Suehnel J."/>
            <person name="Platzer M."/>
        </authorList>
    </citation>
    <scope>NUCLEOTIDE SEQUENCE [LARGE SCALE GENOMIC DNA]</scope>
    <source>
        <strain>ATCC BAA-2496 / DSM 23469 / PBi</strain>
    </source>
</reference>
<comment type="function">
    <text evidence="1">One of several proteins that assist in the late maturation steps of the functional core of the 30S ribosomal subunit. Helps release RbfA from mature subunits. May play a role in the assembly of ribosomal proteins into the subunit. Circularly permuted GTPase that catalyzes slow GTP hydrolysis, GTPase activity is stimulated by the 30S ribosomal subunit.</text>
</comment>
<comment type="cofactor">
    <cofactor evidence="1">
        <name>Zn(2+)</name>
        <dbReference type="ChEBI" id="CHEBI:29105"/>
    </cofactor>
    <text evidence="1">Binds 1 zinc ion per subunit.</text>
</comment>
<comment type="subunit">
    <text evidence="1">Monomer. Associates with 30S ribosomal subunit, binds 16S rRNA.</text>
</comment>
<comment type="subcellular location">
    <subcellularLocation>
        <location evidence="1">Cytoplasm</location>
    </subcellularLocation>
</comment>
<comment type="similarity">
    <text evidence="1">Belongs to the TRAFAC class YlqF/YawG GTPase family. RsgA subfamily.</text>
</comment>
<accession>Q662R3</accession>
<organism>
    <name type="scientific">Borrelia garinii subsp. bavariensis (strain ATCC BAA-2496 / DSM 23469 / PBi)</name>
    <name type="common">Borreliella bavariensis</name>
    <dbReference type="NCBI Taxonomy" id="290434"/>
    <lineage>
        <taxon>Bacteria</taxon>
        <taxon>Pseudomonadati</taxon>
        <taxon>Spirochaetota</taxon>
        <taxon>Spirochaetia</taxon>
        <taxon>Spirochaetales</taxon>
        <taxon>Borreliaceae</taxon>
        <taxon>Borreliella</taxon>
    </lineage>
</organism>
<gene>
    <name evidence="1" type="primary">rsgA</name>
    <name type="ordered locus">BG0100</name>
</gene>
<keyword id="KW-0963">Cytoplasm</keyword>
<keyword id="KW-0342">GTP-binding</keyword>
<keyword id="KW-0378">Hydrolase</keyword>
<keyword id="KW-0479">Metal-binding</keyword>
<keyword id="KW-0547">Nucleotide-binding</keyword>
<keyword id="KW-0690">Ribosome biogenesis</keyword>
<keyword id="KW-0694">RNA-binding</keyword>
<keyword id="KW-0699">rRNA-binding</keyword>
<keyword id="KW-0862">Zinc</keyword>
<sequence>MNYLEFEVIWGVNNIYSILELKSKLIYEGIFKGKILETGCKEYSPLVPGDIVLGYVYGSRKVYIDKRVSRKNILWRYNRKVDLRQAIVSNVDNVLIVNSANFPEMKNFFIDRVLVVAEEQNIVPVIVINKIDKGISQRVEEFSEIYKNLGYRVLKTSVKTFEGIKEVKEILRNSRTSFIGQSGVGKSSLINLIDSRASQSVNEISEKYSRGKHTTVYSISFHSENWIIVDTPGIKEFGVETLPFENLKYYFKEFENFASFCKYKSCLHVSEPHCSVTNSLGNGISKPRYESYLKILSELKNYKNYAK</sequence>
<name>RSGA_BORGP</name>
<feature type="chain" id="PRO_1000188039" description="Small ribosomal subunit biogenesis GTPase RsgA">
    <location>
        <begin position="1"/>
        <end position="307"/>
    </location>
</feature>
<feature type="domain" description="CP-type G" evidence="2">
    <location>
        <begin position="80"/>
        <end position="237"/>
    </location>
</feature>
<feature type="binding site" evidence="1">
    <location>
        <begin position="129"/>
        <end position="132"/>
    </location>
    <ligand>
        <name>GTP</name>
        <dbReference type="ChEBI" id="CHEBI:37565"/>
    </ligand>
</feature>
<feature type="binding site" evidence="1">
    <location>
        <begin position="180"/>
        <end position="188"/>
    </location>
    <ligand>
        <name>GTP</name>
        <dbReference type="ChEBI" id="CHEBI:37565"/>
    </ligand>
</feature>
<feature type="binding site" evidence="1">
    <location>
        <position position="261"/>
    </location>
    <ligand>
        <name>Zn(2+)</name>
        <dbReference type="ChEBI" id="CHEBI:29105"/>
    </ligand>
</feature>
<feature type="binding site" evidence="1">
    <location>
        <position position="266"/>
    </location>
    <ligand>
        <name>Zn(2+)</name>
        <dbReference type="ChEBI" id="CHEBI:29105"/>
    </ligand>
</feature>
<feature type="binding site" evidence="1">
    <location>
        <position position="268"/>
    </location>
    <ligand>
        <name>Zn(2+)</name>
        <dbReference type="ChEBI" id="CHEBI:29105"/>
    </ligand>
</feature>
<feature type="binding site" evidence="1">
    <location>
        <position position="274"/>
    </location>
    <ligand>
        <name>Zn(2+)</name>
        <dbReference type="ChEBI" id="CHEBI:29105"/>
    </ligand>
</feature>
<protein>
    <recommendedName>
        <fullName evidence="1">Small ribosomal subunit biogenesis GTPase RsgA</fullName>
        <ecNumber evidence="1">3.6.1.-</ecNumber>
    </recommendedName>
</protein>
<proteinExistence type="inferred from homology"/>
<dbReference type="EC" id="3.6.1.-" evidence="1"/>
<dbReference type="EMBL" id="CP000013">
    <property type="protein sequence ID" value="AAU06958.1"/>
    <property type="molecule type" value="Genomic_DNA"/>
</dbReference>
<dbReference type="RefSeq" id="WP_011193452.1">
    <property type="nucleotide sequence ID" value="NZ_CP028872.1"/>
</dbReference>
<dbReference type="SMR" id="Q662R3"/>
<dbReference type="GeneID" id="45160895"/>
<dbReference type="KEGG" id="bga:BG0100"/>
<dbReference type="eggNOG" id="COG1162">
    <property type="taxonomic scope" value="Bacteria"/>
</dbReference>
<dbReference type="HOGENOM" id="CLU_033617_2_1_12"/>
<dbReference type="OrthoDB" id="9809485at2"/>
<dbReference type="Proteomes" id="UP000002276">
    <property type="component" value="Chromosome"/>
</dbReference>
<dbReference type="GO" id="GO:0005737">
    <property type="term" value="C:cytoplasm"/>
    <property type="evidence" value="ECO:0007669"/>
    <property type="project" value="UniProtKB-SubCell"/>
</dbReference>
<dbReference type="GO" id="GO:0005525">
    <property type="term" value="F:GTP binding"/>
    <property type="evidence" value="ECO:0007669"/>
    <property type="project" value="UniProtKB-UniRule"/>
</dbReference>
<dbReference type="GO" id="GO:0003924">
    <property type="term" value="F:GTPase activity"/>
    <property type="evidence" value="ECO:0007669"/>
    <property type="project" value="UniProtKB-UniRule"/>
</dbReference>
<dbReference type="GO" id="GO:0046872">
    <property type="term" value="F:metal ion binding"/>
    <property type="evidence" value="ECO:0007669"/>
    <property type="project" value="UniProtKB-KW"/>
</dbReference>
<dbReference type="GO" id="GO:0019843">
    <property type="term" value="F:rRNA binding"/>
    <property type="evidence" value="ECO:0007669"/>
    <property type="project" value="UniProtKB-KW"/>
</dbReference>
<dbReference type="GO" id="GO:0042274">
    <property type="term" value="P:ribosomal small subunit biogenesis"/>
    <property type="evidence" value="ECO:0007669"/>
    <property type="project" value="UniProtKB-UniRule"/>
</dbReference>
<dbReference type="CDD" id="cd01854">
    <property type="entry name" value="YjeQ_EngC"/>
    <property type="match status" value="1"/>
</dbReference>
<dbReference type="Gene3D" id="3.40.50.300">
    <property type="entry name" value="P-loop containing nucleotide triphosphate hydrolases"/>
    <property type="match status" value="1"/>
</dbReference>
<dbReference type="Gene3D" id="1.10.40.50">
    <property type="entry name" value="Probable gtpase engc, domain 3"/>
    <property type="match status" value="1"/>
</dbReference>
<dbReference type="HAMAP" id="MF_01820">
    <property type="entry name" value="GTPase_RsgA"/>
    <property type="match status" value="1"/>
</dbReference>
<dbReference type="InterPro" id="IPR030378">
    <property type="entry name" value="G_CP_dom"/>
</dbReference>
<dbReference type="InterPro" id="IPR027417">
    <property type="entry name" value="P-loop_NTPase"/>
</dbReference>
<dbReference type="InterPro" id="IPR004881">
    <property type="entry name" value="Ribosome_biogen_GTPase_RsgA"/>
</dbReference>
<dbReference type="InterPro" id="IPR010914">
    <property type="entry name" value="RsgA_GTPase_dom"/>
</dbReference>
<dbReference type="NCBIfam" id="TIGR00157">
    <property type="entry name" value="ribosome small subunit-dependent GTPase A"/>
    <property type="match status" value="1"/>
</dbReference>
<dbReference type="PANTHER" id="PTHR32120">
    <property type="entry name" value="SMALL RIBOSOMAL SUBUNIT BIOGENESIS GTPASE RSGA"/>
    <property type="match status" value="1"/>
</dbReference>
<dbReference type="PANTHER" id="PTHR32120:SF11">
    <property type="entry name" value="SMALL RIBOSOMAL SUBUNIT BIOGENESIS GTPASE RSGA 1, MITOCHONDRIAL-RELATED"/>
    <property type="match status" value="1"/>
</dbReference>
<dbReference type="Pfam" id="PF03193">
    <property type="entry name" value="RsgA_GTPase"/>
    <property type="match status" value="1"/>
</dbReference>
<dbReference type="SUPFAM" id="SSF52540">
    <property type="entry name" value="P-loop containing nucleoside triphosphate hydrolases"/>
    <property type="match status" value="1"/>
</dbReference>
<dbReference type="PROSITE" id="PS50936">
    <property type="entry name" value="ENGC_GTPASE"/>
    <property type="match status" value="1"/>
</dbReference>
<dbReference type="PROSITE" id="PS51721">
    <property type="entry name" value="G_CP"/>
    <property type="match status" value="1"/>
</dbReference>
<evidence type="ECO:0000255" key="1">
    <source>
        <dbReference type="HAMAP-Rule" id="MF_01820"/>
    </source>
</evidence>
<evidence type="ECO:0000255" key="2">
    <source>
        <dbReference type="PROSITE-ProRule" id="PRU01058"/>
    </source>
</evidence>